<protein>
    <recommendedName>
        <fullName evidence="10">Nuclear poly(A) polymerase 4</fullName>
        <shortName evidence="9">AtPAP(IV)</shortName>
        <shortName evidence="11">PAP(IV)</shortName>
        <shortName evidence="11">Poly(A) polymerase IV</shortName>
        <shortName evidence="9">nPAP</shortName>
        <ecNumber evidence="5">2.7.7.19</ecNumber>
    </recommendedName>
    <alternativeName>
        <fullName evidence="11">Polynucleotide adenylyltransferase 4</fullName>
    </alternativeName>
</protein>
<accession>Q8VYW1</accession>
<accession>B3H654</accession>
<accession>B9DFE4</accession>
<accession>F4JV63</accession>
<accession>F4JV67</accession>
<accession>F4JV69</accession>
<accession>F4JV71</accession>
<accession>F4JV72</accession>
<accession>Q0WLA9</accession>
<accession>Q7XJ91</accession>
<accession>Q9M075</accession>
<proteinExistence type="evidence at protein level"/>
<keyword id="KW-0025">Alternative splicing</keyword>
<keyword id="KW-0067">ATP-binding</keyword>
<keyword id="KW-0460">Magnesium</keyword>
<keyword id="KW-0479">Metal-binding</keyword>
<keyword id="KW-0507">mRNA processing</keyword>
<keyword id="KW-0547">Nucleotide-binding</keyword>
<keyword id="KW-0548">Nucleotidyltransferase</keyword>
<keyword id="KW-0539">Nucleus</keyword>
<keyword id="KW-1185">Reference proteome</keyword>
<keyword id="KW-0808">Transferase</keyword>
<feature type="chain" id="PRO_0000431348" description="Nuclear poly(A) polymerase 4">
    <location>
        <begin position="1"/>
        <end position="741"/>
    </location>
</feature>
<feature type="region of interest" description="Disordered" evidence="4">
    <location>
        <begin position="494"/>
        <end position="556"/>
    </location>
</feature>
<feature type="region of interest" description="Disordered" evidence="4">
    <location>
        <begin position="683"/>
        <end position="741"/>
    </location>
</feature>
<feature type="short sequence motif" description="Nuclear localization signal" evidence="3">
    <location>
        <begin position="485"/>
        <end position="492"/>
    </location>
</feature>
<feature type="compositionally biased region" description="Basic and acidic residues" evidence="4">
    <location>
        <begin position="534"/>
        <end position="551"/>
    </location>
</feature>
<feature type="compositionally biased region" description="Polar residues" evidence="4">
    <location>
        <begin position="701"/>
        <end position="717"/>
    </location>
</feature>
<feature type="compositionally biased region" description="Basic and acidic residues" evidence="4">
    <location>
        <begin position="721"/>
        <end position="731"/>
    </location>
</feature>
<feature type="compositionally biased region" description="Polar residues" evidence="4">
    <location>
        <begin position="732"/>
        <end position="741"/>
    </location>
</feature>
<feature type="binding site" evidence="1">
    <location>
        <begin position="101"/>
        <end position="103"/>
    </location>
    <ligand>
        <name>ATP</name>
        <dbReference type="ChEBI" id="CHEBI:30616"/>
    </ligand>
</feature>
<feature type="binding site" evidence="2">
    <location>
        <begin position="113"/>
        <end position="116"/>
    </location>
    <ligand>
        <name>ATP</name>
        <dbReference type="ChEBI" id="CHEBI:30616"/>
    </ligand>
</feature>
<feature type="binding site" evidence="1">
    <location>
        <begin position="114"/>
        <end position="116"/>
    </location>
    <ligand>
        <name>ATP</name>
        <dbReference type="ChEBI" id="CHEBI:30616"/>
    </ligand>
</feature>
<feature type="binding site" evidence="1">
    <location>
        <position position="114"/>
    </location>
    <ligand>
        <name>Mg(2+)</name>
        <dbReference type="ChEBI" id="CHEBI:18420"/>
        <label>1</label>
        <note>catalytic</note>
    </ligand>
</feature>
<feature type="binding site" evidence="1">
    <location>
        <position position="114"/>
    </location>
    <ligand>
        <name>Mg(2+)</name>
        <dbReference type="ChEBI" id="CHEBI:18420"/>
        <label>2</label>
        <note>catalytic</note>
    </ligand>
</feature>
<feature type="binding site" evidence="1">
    <location>
        <position position="116"/>
    </location>
    <ligand>
        <name>Mg(2+)</name>
        <dbReference type="ChEBI" id="CHEBI:18420"/>
        <label>1</label>
        <note>catalytic</note>
    </ligand>
</feature>
<feature type="binding site" evidence="1">
    <location>
        <position position="116"/>
    </location>
    <ligand>
        <name>Mg(2+)</name>
        <dbReference type="ChEBI" id="CHEBI:18420"/>
        <label>2</label>
        <note>catalytic</note>
    </ligand>
</feature>
<feature type="binding site" evidence="1">
    <location>
        <position position="169"/>
    </location>
    <ligand>
        <name>ATP</name>
        <dbReference type="ChEBI" id="CHEBI:30616"/>
    </ligand>
</feature>
<feature type="binding site" evidence="1">
    <location>
        <position position="169"/>
    </location>
    <ligand>
        <name>Mg(2+)</name>
        <dbReference type="ChEBI" id="CHEBI:18420"/>
        <label>2</label>
        <note>catalytic</note>
    </ligand>
</feature>
<feature type="binding site" evidence="1">
    <location>
        <position position="230"/>
    </location>
    <ligand>
        <name>ATP</name>
        <dbReference type="ChEBI" id="CHEBI:30616"/>
    </ligand>
</feature>
<feature type="binding site" evidence="1">
    <location>
        <position position="239"/>
    </location>
    <ligand>
        <name>ATP</name>
        <dbReference type="ChEBI" id="CHEBI:30616"/>
    </ligand>
</feature>
<feature type="binding site" evidence="1">
    <location>
        <begin position="248"/>
        <end position="249"/>
    </location>
    <ligand>
        <name>ATP</name>
        <dbReference type="ChEBI" id="CHEBI:30616"/>
    </ligand>
</feature>
<feature type="site" description="Interaction with RNA" evidence="2">
    <location>
        <position position="160"/>
    </location>
</feature>
<feature type="site" description="Interaction with RNA" evidence="2">
    <location>
        <position position="330"/>
    </location>
</feature>
<feature type="site" description="Interaction with RNA" evidence="2">
    <location>
        <position position="401"/>
    </location>
</feature>
<feature type="site" description="Interaction with RNA" evidence="2">
    <location>
        <position position="406"/>
    </location>
</feature>
<feature type="site" description="Interaction with RNA" evidence="2">
    <location>
        <position position="598"/>
    </location>
</feature>
<feature type="splice variant" id="VSP_057246" description="In isoform 5.">
    <original>SNSLVSGMEKSEDRARSE</original>
    <variation>VIKLPHSSYHKISSVENI</variation>
    <location>
        <begin position="713"/>
        <end position="730"/>
    </location>
</feature>
<feature type="splice variant" id="VSP_057247" description="In isoform 7.">
    <original>SNSL</original>
    <variation>CQET</variation>
    <location>
        <begin position="713"/>
        <end position="716"/>
    </location>
</feature>
<feature type="splice variant" id="VSP_057248" description="In isoform 7.">
    <location>
        <begin position="717"/>
        <end position="741"/>
    </location>
</feature>
<feature type="splice variant" id="VSP_057249" description="In isoform 4.">
    <original>RSESFQKSQIRLLT</original>
    <variation>STSRLSLKSTV</variation>
    <location>
        <begin position="728"/>
        <end position="741"/>
    </location>
</feature>
<feature type="splice variant" id="VSP_057250" description="In isoform 6.">
    <original>SESFQKSQIRLLT</original>
    <variation>LSLKSTV</variation>
    <location>
        <begin position="729"/>
        <end position="741"/>
    </location>
</feature>
<feature type="splice variant" id="VSP_057251" description="In isoform 5.">
    <location>
        <begin position="731"/>
        <end position="741"/>
    </location>
</feature>
<feature type="splice variant" id="VSP_057252" description="In isoform 2.">
    <original>LLT</original>
    <variation>HVCYAKS</variation>
    <location>
        <begin position="739"/>
        <end position="741"/>
    </location>
</feature>
<feature type="splice variant" id="VSP_057253" description="In isoform 8.">
    <original>LLT</original>
    <variation>HAIDVKKTGDFNSNCCVGQTTESRSFW</variation>
    <location>
        <begin position="739"/>
        <end position="741"/>
    </location>
</feature>
<feature type="splice variant" id="VSP_057254" description="In isoform 3.">
    <original>LT</original>
    <variation>SLKSTV</variation>
    <location>
        <begin position="740"/>
        <end position="741"/>
    </location>
</feature>
<comment type="function">
    <text evidence="1 5 8">Essential protein (PubMed:19956626). Polymerase that creates the 3'-poly(A) tail of mRNA's (PubMed:15297145). Also required for the endoribonucleolytic cleavage reaction at some polyadenylation sites. May acquire specificity through interaction with a cleavage and polyadenylation specificity factor (CPSF) at its C-terminus (By similarity).</text>
</comment>
<comment type="catalytic activity">
    <reaction evidence="5">
        <text>RNA(n) + ATP = RNA(n)-3'-adenine ribonucleotide + diphosphate</text>
        <dbReference type="Rhea" id="RHEA:11332"/>
        <dbReference type="Rhea" id="RHEA-COMP:14527"/>
        <dbReference type="Rhea" id="RHEA-COMP:17347"/>
        <dbReference type="ChEBI" id="CHEBI:30616"/>
        <dbReference type="ChEBI" id="CHEBI:33019"/>
        <dbReference type="ChEBI" id="CHEBI:140395"/>
        <dbReference type="ChEBI" id="CHEBI:173115"/>
        <dbReference type="EC" id="2.7.7.19"/>
    </reaction>
</comment>
<comment type="cofactor">
    <cofactor evidence="1">
        <name>Mg(2+)</name>
        <dbReference type="ChEBI" id="CHEBI:18420"/>
    </cofactor>
    <cofactor evidence="1">
        <name>Mn(2+)</name>
        <dbReference type="ChEBI" id="CHEBI:29035"/>
    </cofactor>
    <text evidence="1">Binds 2 magnesium ions. Also active with manganese.</text>
</comment>
<comment type="subunit">
    <text evidence="1 6 7">Monomer (By similarity). Forms a complex with cleavage and polyadenylation specificity factor (CPSF) subunits CFIS2, FIPS3, PAPS1, PABN1, PABN2, PABN3 and FIPS5 (PubMed:16282318, PubMed:18479511).</text>
</comment>
<comment type="interaction">
    <interactant intactId="EBI-962558">
        <id>Q8VYW1</id>
    </interactant>
    <interactant intactId="EBI-962489">
        <id>F4KDH9</id>
        <label>FIPS5</label>
    </interactant>
    <organismsDiffer>false</organismsDiffer>
    <experiments>3</experiments>
</comment>
<comment type="subcellular location">
    <subcellularLocation>
        <location evidence="3 8">Nucleus</location>
    </subcellularLocation>
</comment>
<comment type="alternative products">
    <event type="alternative splicing"/>
    <isoform>
        <id>Q8VYW1-1</id>
        <name>1</name>
        <sequence type="displayed"/>
    </isoform>
    <isoform>
        <id>Q8VYW1-2</id>
        <name>2</name>
        <sequence type="described" ref="VSP_057252"/>
    </isoform>
    <isoform>
        <id>Q8VYW1-3</id>
        <name>3</name>
        <sequence type="described" ref="VSP_057254"/>
    </isoform>
    <isoform>
        <id>Q8VYW1-4</id>
        <name>4</name>
        <sequence type="described" ref="VSP_057249"/>
    </isoform>
    <isoform>
        <id>Q8VYW1-5</id>
        <name>5</name>
        <sequence type="described" ref="VSP_057246 VSP_057251"/>
    </isoform>
    <isoform>
        <id>Q8VYW1-6</id>
        <name>6</name>
        <sequence type="described" ref="VSP_057250"/>
    </isoform>
    <isoform>
        <id>Q8VYW1-7</id>
        <name>7</name>
        <sequence type="described" ref="VSP_057247 VSP_057248"/>
    </isoform>
    <isoform>
        <id>Q8VYW1-8</id>
        <name>8</name>
        <sequence type="described" ref="VSP_057253"/>
    </isoform>
</comment>
<comment type="tissue specificity">
    <text evidence="5 8">Mostly expressed in flowers (very active in pollen, sepals, styles, and stigmas), cotyledons and hypocotyls, and, to a lower extent, in roots (confined to the vascular tissue in the radicle) and leaves (in the vascular tissue and leaf petioles). Barely detected in stems (PubMed:15297145, PubMed:19956626). Active in the primary and secondary root systems (PubMed:19956626).</text>
</comment>
<comment type="disruption phenotype">
    <text evidence="8">Lethal.</text>
</comment>
<comment type="miscellaneous">
    <molecule>Isoform 3</molecule>
    <text evidence="13">Incomplete sequence.</text>
</comment>
<comment type="miscellaneous">
    <molecule>Isoform 4</molecule>
    <text evidence="12">Incomplete sequence.</text>
</comment>
<comment type="similarity">
    <text evidence="11">Belongs to the poly(A) polymerase family.</text>
</comment>
<comment type="sequence caution" evidence="11">
    <conflict type="erroneous initiation">
        <sequence resource="EMBL-CDS" id="CAB80002"/>
    </conflict>
    <text>Truncated N-terminus.</text>
</comment>
<gene>
    <name evidence="10" type="primary">PAPS4</name>
    <name evidence="9" type="synonym">NPAP</name>
    <name evidence="14" type="ordered locus">At4g32850</name>
    <name evidence="16" type="ORF">T16I18.60</name>
</gene>
<name>PAPS4_ARATH</name>
<dbReference type="EC" id="2.7.7.19" evidence="5"/>
<dbReference type="EMBL" id="AL161582">
    <property type="protein sequence ID" value="CAB80002.1"/>
    <property type="status" value="ALT_INIT"/>
    <property type="molecule type" value="Genomic_DNA"/>
</dbReference>
<dbReference type="EMBL" id="CP002687">
    <property type="protein sequence ID" value="AEE86126.1"/>
    <property type="molecule type" value="Genomic_DNA"/>
</dbReference>
<dbReference type="EMBL" id="CP002687">
    <property type="protein sequence ID" value="AEE86127.1"/>
    <property type="molecule type" value="Genomic_DNA"/>
</dbReference>
<dbReference type="EMBL" id="CP002687">
    <property type="protein sequence ID" value="AEE86128.1"/>
    <property type="molecule type" value="Genomic_DNA"/>
</dbReference>
<dbReference type="EMBL" id="CP002687">
    <property type="protein sequence ID" value="AEE86129.1"/>
    <property type="molecule type" value="Genomic_DNA"/>
</dbReference>
<dbReference type="EMBL" id="CP002687">
    <property type="protein sequence ID" value="AEE86130.1"/>
    <property type="molecule type" value="Genomic_DNA"/>
</dbReference>
<dbReference type="EMBL" id="CP002687">
    <property type="protein sequence ID" value="AEE86131.1"/>
    <property type="molecule type" value="Genomic_DNA"/>
</dbReference>
<dbReference type="EMBL" id="CP002687">
    <property type="protein sequence ID" value="AEE86132.1"/>
    <property type="molecule type" value="Genomic_DNA"/>
</dbReference>
<dbReference type="EMBL" id="CP002687">
    <property type="protein sequence ID" value="AEE86133.1"/>
    <property type="molecule type" value="Genomic_DNA"/>
</dbReference>
<dbReference type="EMBL" id="CP002687">
    <property type="protein sequence ID" value="AEE86134.1"/>
    <property type="molecule type" value="Genomic_DNA"/>
</dbReference>
<dbReference type="EMBL" id="CP002687">
    <property type="protein sequence ID" value="AEE86135.1"/>
    <property type="molecule type" value="Genomic_DNA"/>
</dbReference>
<dbReference type="EMBL" id="CP002687">
    <property type="protein sequence ID" value="ANM67865.1"/>
    <property type="molecule type" value="Genomic_DNA"/>
</dbReference>
<dbReference type="EMBL" id="CP002687">
    <property type="protein sequence ID" value="ANM67866.1"/>
    <property type="molecule type" value="Genomic_DNA"/>
</dbReference>
<dbReference type="EMBL" id="CP002687">
    <property type="protein sequence ID" value="ANM67867.1"/>
    <property type="molecule type" value="Genomic_DNA"/>
</dbReference>
<dbReference type="EMBL" id="CP002687">
    <property type="protein sequence ID" value="ANM67868.1"/>
    <property type="molecule type" value="Genomic_DNA"/>
</dbReference>
<dbReference type="EMBL" id="CP002687">
    <property type="protein sequence ID" value="ANM67869.1"/>
    <property type="molecule type" value="Genomic_DNA"/>
</dbReference>
<dbReference type="EMBL" id="CP002687">
    <property type="protein sequence ID" value="ANM67870.1"/>
    <property type="molecule type" value="Genomic_DNA"/>
</dbReference>
<dbReference type="EMBL" id="CP002687">
    <property type="protein sequence ID" value="ANM67871.1"/>
    <property type="molecule type" value="Genomic_DNA"/>
</dbReference>
<dbReference type="EMBL" id="AY069880">
    <property type="protein sequence ID" value="AAL47435.1"/>
    <property type="molecule type" value="mRNA"/>
</dbReference>
<dbReference type="EMBL" id="BT000485">
    <property type="protein sequence ID" value="AAN18054.1"/>
    <property type="molecule type" value="mRNA"/>
</dbReference>
<dbReference type="EMBL" id="AK316738">
    <property type="protein sequence ID" value="BAH19461.1"/>
    <property type="molecule type" value="mRNA"/>
</dbReference>
<dbReference type="EMBL" id="AK318704">
    <property type="protein sequence ID" value="BAH56819.1"/>
    <property type="molecule type" value="mRNA"/>
</dbReference>
<dbReference type="EMBL" id="AY323908">
    <property type="protein sequence ID" value="AAP86216.1"/>
    <property type="molecule type" value="mRNA"/>
</dbReference>
<dbReference type="EMBL" id="AK230297">
    <property type="protein sequence ID" value="BAF02098.1"/>
    <property type="molecule type" value="mRNA"/>
</dbReference>
<dbReference type="PIR" id="T10692">
    <property type="entry name" value="T10692"/>
</dbReference>
<dbReference type="RefSeq" id="NP_001031778.1">
    <molecule id="Q8VYW1-7"/>
    <property type="nucleotide sequence ID" value="NM_001036701.1"/>
</dbReference>
<dbReference type="RefSeq" id="NP_001031779.1">
    <molecule id="Q8VYW1-8"/>
    <property type="nucleotide sequence ID" value="NM_001036702.1"/>
</dbReference>
<dbReference type="RefSeq" id="NP_001119102.1">
    <molecule id="Q8VYW1-3"/>
    <property type="nucleotide sequence ID" value="NM_001125630.1"/>
</dbReference>
<dbReference type="RefSeq" id="NP_001119103.1">
    <molecule id="Q8VYW1-2"/>
    <property type="nucleotide sequence ID" value="NM_001125631.2"/>
</dbReference>
<dbReference type="RefSeq" id="NP_001329663.1">
    <molecule id="Q8VYW1-5"/>
    <property type="nucleotide sequence ID" value="NM_001342181.1"/>
</dbReference>
<dbReference type="RefSeq" id="NP_001329664.1">
    <molecule id="Q8VYW1-5"/>
    <property type="nucleotide sequence ID" value="NM_001342180.1"/>
</dbReference>
<dbReference type="RefSeq" id="NP_001329665.1">
    <molecule id="Q8VYW1-5"/>
    <property type="nucleotide sequence ID" value="NM_001342179.1"/>
</dbReference>
<dbReference type="RefSeq" id="NP_001329666.1">
    <molecule id="Q8VYW1-5"/>
    <property type="nucleotide sequence ID" value="NM_001342185.1"/>
</dbReference>
<dbReference type="RefSeq" id="NP_001329667.1">
    <molecule id="Q8VYW1-5"/>
    <property type="nucleotide sequence ID" value="NM_001342184.1"/>
</dbReference>
<dbReference type="RefSeq" id="NP_001329668.1">
    <molecule id="Q8VYW1-5"/>
    <property type="nucleotide sequence ID" value="NM_001342183.1"/>
</dbReference>
<dbReference type="RefSeq" id="NP_001329669.1">
    <molecule id="Q8VYW1-5"/>
    <property type="nucleotide sequence ID" value="NM_001342182.1"/>
</dbReference>
<dbReference type="RefSeq" id="NP_195011.4">
    <molecule id="Q8VYW1-6"/>
    <property type="nucleotide sequence ID" value="NM_119438.4"/>
</dbReference>
<dbReference type="RefSeq" id="NP_849561.1">
    <molecule id="Q8VYW1-1"/>
    <property type="nucleotide sequence ID" value="NM_179230.2"/>
</dbReference>
<dbReference type="RefSeq" id="NP_849562.2">
    <molecule id="Q8VYW1-4"/>
    <property type="nucleotide sequence ID" value="NM_179231.2"/>
</dbReference>
<dbReference type="RefSeq" id="NP_974668.1">
    <molecule id="Q8VYW1-5"/>
    <property type="nucleotide sequence ID" value="NM_202939.3"/>
</dbReference>
<dbReference type="RefSeq" id="NP_974669.1">
    <molecule id="Q8VYW1-3"/>
    <property type="nucleotide sequence ID" value="NM_202940.3"/>
</dbReference>
<dbReference type="RefSeq" id="NP_974670.2">
    <molecule id="Q8VYW1-4"/>
    <property type="nucleotide sequence ID" value="NM_202941.3"/>
</dbReference>
<dbReference type="SMR" id="Q8VYW1"/>
<dbReference type="BioGRID" id="14706">
    <property type="interactions" value="9"/>
</dbReference>
<dbReference type="FunCoup" id="Q8VYW1">
    <property type="interactions" value="4092"/>
</dbReference>
<dbReference type="IntAct" id="Q8VYW1">
    <property type="interactions" value="7"/>
</dbReference>
<dbReference type="STRING" id="3702.Q8VYW1"/>
<dbReference type="iPTMnet" id="Q8VYW1"/>
<dbReference type="PaxDb" id="3702-AT4G32850.8"/>
<dbReference type="ProteomicsDB" id="236323">
    <molecule id="Q8VYW1-1"/>
</dbReference>
<dbReference type="EnsemblPlants" id="AT4G32850.1">
    <molecule id="Q8VYW1-1"/>
    <property type="protein sequence ID" value="AT4G32850.1"/>
    <property type="gene ID" value="AT4G32850"/>
</dbReference>
<dbReference type="EnsemblPlants" id="AT4G32850.10">
    <molecule id="Q8VYW1-2"/>
    <property type="protein sequence ID" value="AT4G32850.10"/>
    <property type="gene ID" value="AT4G32850"/>
</dbReference>
<dbReference type="EnsemblPlants" id="AT4G32850.11">
    <molecule id="Q8VYW1-5"/>
    <property type="protein sequence ID" value="AT4G32850.11"/>
    <property type="gene ID" value="AT4G32850"/>
</dbReference>
<dbReference type="EnsemblPlants" id="AT4G32850.12">
    <molecule id="Q8VYW1-5"/>
    <property type="protein sequence ID" value="AT4G32850.12"/>
    <property type="gene ID" value="AT4G32850"/>
</dbReference>
<dbReference type="EnsemblPlants" id="AT4G32850.13">
    <molecule id="Q8VYW1-5"/>
    <property type="protein sequence ID" value="AT4G32850.13"/>
    <property type="gene ID" value="AT4G32850"/>
</dbReference>
<dbReference type="EnsemblPlants" id="AT4G32850.14">
    <molecule id="Q8VYW1-5"/>
    <property type="protein sequence ID" value="AT4G32850.14"/>
    <property type="gene ID" value="AT4G32850"/>
</dbReference>
<dbReference type="EnsemblPlants" id="AT4G32850.15">
    <molecule id="Q8VYW1-5"/>
    <property type="protein sequence ID" value="AT4G32850.15"/>
    <property type="gene ID" value="AT4G32850"/>
</dbReference>
<dbReference type="EnsemblPlants" id="AT4G32850.16">
    <molecule id="Q8VYW1-5"/>
    <property type="protein sequence ID" value="AT4G32850.16"/>
    <property type="gene ID" value="AT4G32850"/>
</dbReference>
<dbReference type="EnsemblPlants" id="AT4G32850.17">
    <molecule id="Q8VYW1-5"/>
    <property type="protein sequence ID" value="AT4G32850.17"/>
    <property type="gene ID" value="AT4G32850"/>
</dbReference>
<dbReference type="EnsemblPlants" id="AT4G32850.2">
    <molecule id="Q8VYW1-4"/>
    <property type="protein sequence ID" value="AT4G32850.2"/>
    <property type="gene ID" value="AT4G32850"/>
</dbReference>
<dbReference type="EnsemblPlants" id="AT4G32850.3">
    <molecule id="Q8VYW1-6"/>
    <property type="protein sequence ID" value="AT4G32850.3"/>
    <property type="gene ID" value="AT4G32850"/>
</dbReference>
<dbReference type="EnsemblPlants" id="AT4G32850.4">
    <molecule id="Q8VYW1-5"/>
    <property type="protein sequence ID" value="AT4G32850.4"/>
    <property type="gene ID" value="AT4G32850"/>
</dbReference>
<dbReference type="EnsemblPlants" id="AT4G32850.5">
    <molecule id="Q8VYW1-3"/>
    <property type="protein sequence ID" value="AT4G32850.5"/>
    <property type="gene ID" value="AT4G32850"/>
</dbReference>
<dbReference type="EnsemblPlants" id="AT4G32850.6">
    <molecule id="Q8VYW1-4"/>
    <property type="protein sequence ID" value="AT4G32850.6"/>
    <property type="gene ID" value="AT4G32850"/>
</dbReference>
<dbReference type="EnsemblPlants" id="AT4G32850.7">
    <molecule id="Q8VYW1-7"/>
    <property type="protein sequence ID" value="AT4G32850.7"/>
    <property type="gene ID" value="AT4G32850"/>
</dbReference>
<dbReference type="EnsemblPlants" id="AT4G32850.8">
    <molecule id="Q8VYW1-8"/>
    <property type="protein sequence ID" value="AT4G32850.8"/>
    <property type="gene ID" value="AT4G32850"/>
</dbReference>
<dbReference type="EnsemblPlants" id="AT4G32850.9">
    <molecule id="Q8VYW1-3"/>
    <property type="protein sequence ID" value="AT4G32850.9"/>
    <property type="gene ID" value="AT4G32850"/>
</dbReference>
<dbReference type="GeneID" id="829421"/>
<dbReference type="Gramene" id="AT4G32850.1">
    <molecule id="Q8VYW1-1"/>
    <property type="protein sequence ID" value="AT4G32850.1"/>
    <property type="gene ID" value="AT4G32850"/>
</dbReference>
<dbReference type="Gramene" id="AT4G32850.10">
    <molecule id="Q8VYW1-2"/>
    <property type="protein sequence ID" value="AT4G32850.10"/>
    <property type="gene ID" value="AT4G32850"/>
</dbReference>
<dbReference type="Gramene" id="AT4G32850.11">
    <molecule id="Q8VYW1-5"/>
    <property type="protein sequence ID" value="AT4G32850.11"/>
    <property type="gene ID" value="AT4G32850"/>
</dbReference>
<dbReference type="Gramene" id="AT4G32850.12">
    <molecule id="Q8VYW1-5"/>
    <property type="protein sequence ID" value="AT4G32850.12"/>
    <property type="gene ID" value="AT4G32850"/>
</dbReference>
<dbReference type="Gramene" id="AT4G32850.13">
    <molecule id="Q8VYW1-5"/>
    <property type="protein sequence ID" value="AT4G32850.13"/>
    <property type="gene ID" value="AT4G32850"/>
</dbReference>
<dbReference type="Gramene" id="AT4G32850.14">
    <molecule id="Q8VYW1-5"/>
    <property type="protein sequence ID" value="AT4G32850.14"/>
    <property type="gene ID" value="AT4G32850"/>
</dbReference>
<dbReference type="Gramene" id="AT4G32850.15">
    <molecule id="Q8VYW1-5"/>
    <property type="protein sequence ID" value="AT4G32850.15"/>
    <property type="gene ID" value="AT4G32850"/>
</dbReference>
<dbReference type="Gramene" id="AT4G32850.16">
    <molecule id="Q8VYW1-5"/>
    <property type="protein sequence ID" value="AT4G32850.16"/>
    <property type="gene ID" value="AT4G32850"/>
</dbReference>
<dbReference type="Gramene" id="AT4G32850.17">
    <molecule id="Q8VYW1-5"/>
    <property type="protein sequence ID" value="AT4G32850.17"/>
    <property type="gene ID" value="AT4G32850"/>
</dbReference>
<dbReference type="Gramene" id="AT4G32850.2">
    <molecule id="Q8VYW1-4"/>
    <property type="protein sequence ID" value="AT4G32850.2"/>
    <property type="gene ID" value="AT4G32850"/>
</dbReference>
<dbReference type="Gramene" id="AT4G32850.3">
    <molecule id="Q8VYW1-6"/>
    <property type="protein sequence ID" value="AT4G32850.3"/>
    <property type="gene ID" value="AT4G32850"/>
</dbReference>
<dbReference type="Gramene" id="AT4G32850.4">
    <molecule id="Q8VYW1-5"/>
    <property type="protein sequence ID" value="AT4G32850.4"/>
    <property type="gene ID" value="AT4G32850"/>
</dbReference>
<dbReference type="Gramene" id="AT4G32850.5">
    <molecule id="Q8VYW1-3"/>
    <property type="protein sequence ID" value="AT4G32850.5"/>
    <property type="gene ID" value="AT4G32850"/>
</dbReference>
<dbReference type="Gramene" id="AT4G32850.6">
    <molecule id="Q8VYW1-4"/>
    <property type="protein sequence ID" value="AT4G32850.6"/>
    <property type="gene ID" value="AT4G32850"/>
</dbReference>
<dbReference type="Gramene" id="AT4G32850.7">
    <molecule id="Q8VYW1-7"/>
    <property type="protein sequence ID" value="AT4G32850.7"/>
    <property type="gene ID" value="AT4G32850"/>
</dbReference>
<dbReference type="Gramene" id="AT4G32850.8">
    <molecule id="Q8VYW1-8"/>
    <property type="protein sequence ID" value="AT4G32850.8"/>
    <property type="gene ID" value="AT4G32850"/>
</dbReference>
<dbReference type="Gramene" id="AT4G32850.9">
    <molecule id="Q8VYW1-3"/>
    <property type="protein sequence ID" value="AT4G32850.9"/>
    <property type="gene ID" value="AT4G32850"/>
</dbReference>
<dbReference type="KEGG" id="ath:AT4G32850"/>
<dbReference type="Araport" id="AT4G32850"/>
<dbReference type="TAIR" id="AT4G32850">
    <property type="gene designation" value="NPAP"/>
</dbReference>
<dbReference type="eggNOG" id="KOG2245">
    <property type="taxonomic scope" value="Eukaryota"/>
</dbReference>
<dbReference type="InParanoid" id="Q8VYW1"/>
<dbReference type="OMA" id="CHPYPKE"/>
<dbReference type="PhylomeDB" id="Q8VYW1"/>
<dbReference type="BRENDA" id="2.7.7.19">
    <property type="organism ID" value="399"/>
</dbReference>
<dbReference type="PRO" id="PR:Q8VYW1"/>
<dbReference type="Proteomes" id="UP000006548">
    <property type="component" value="Chromosome 4"/>
</dbReference>
<dbReference type="ExpressionAtlas" id="Q8VYW1">
    <property type="expression patterns" value="baseline and differential"/>
</dbReference>
<dbReference type="GO" id="GO:0005634">
    <property type="term" value="C:nucleus"/>
    <property type="evidence" value="ECO:0000314"/>
    <property type="project" value="TAIR"/>
</dbReference>
<dbReference type="GO" id="GO:0005524">
    <property type="term" value="F:ATP binding"/>
    <property type="evidence" value="ECO:0007669"/>
    <property type="project" value="UniProtKB-KW"/>
</dbReference>
<dbReference type="GO" id="GO:0046872">
    <property type="term" value="F:metal ion binding"/>
    <property type="evidence" value="ECO:0007669"/>
    <property type="project" value="UniProtKB-KW"/>
</dbReference>
<dbReference type="GO" id="GO:1990817">
    <property type="term" value="F:poly(A) RNA polymerase activity"/>
    <property type="evidence" value="ECO:0007669"/>
    <property type="project" value="UniProtKB-EC"/>
</dbReference>
<dbReference type="GO" id="GO:0003723">
    <property type="term" value="F:RNA binding"/>
    <property type="evidence" value="ECO:0007669"/>
    <property type="project" value="InterPro"/>
</dbReference>
<dbReference type="GO" id="GO:0006397">
    <property type="term" value="P:mRNA processing"/>
    <property type="evidence" value="ECO:0007669"/>
    <property type="project" value="UniProtKB-KW"/>
</dbReference>
<dbReference type="GO" id="GO:0031123">
    <property type="term" value="P:RNA 3'-end processing"/>
    <property type="evidence" value="ECO:0007669"/>
    <property type="project" value="InterPro"/>
</dbReference>
<dbReference type="CDD" id="cd05402">
    <property type="entry name" value="NT_PAP_TUTase"/>
    <property type="match status" value="1"/>
</dbReference>
<dbReference type="FunFam" id="3.30.70.590:FF:000002">
    <property type="entry name" value="Nuclear poly(A) polymerase 4"/>
    <property type="match status" value="1"/>
</dbReference>
<dbReference type="FunFam" id="3.30.460.10:FF:000002">
    <property type="entry name" value="Poly(A) polymerase alpha, putative"/>
    <property type="match status" value="1"/>
</dbReference>
<dbReference type="FunFam" id="1.10.1410.10:FF:000001">
    <property type="entry name" value="Putative poly(A) polymerase gamma"/>
    <property type="match status" value="1"/>
</dbReference>
<dbReference type="Gene3D" id="1.10.1410.10">
    <property type="match status" value="1"/>
</dbReference>
<dbReference type="Gene3D" id="3.30.460.10">
    <property type="entry name" value="Beta Polymerase, domain 2"/>
    <property type="match status" value="1"/>
</dbReference>
<dbReference type="Gene3D" id="3.30.70.590">
    <property type="entry name" value="Poly(A) polymerase predicted RNA binding domain"/>
    <property type="match status" value="1"/>
</dbReference>
<dbReference type="InterPro" id="IPR043519">
    <property type="entry name" value="NT_sf"/>
</dbReference>
<dbReference type="InterPro" id="IPR011068">
    <property type="entry name" value="NuclTrfase_I-like_C"/>
</dbReference>
<dbReference type="InterPro" id="IPR007012">
    <property type="entry name" value="PolA_pol_cen_dom"/>
</dbReference>
<dbReference type="InterPro" id="IPR048840">
    <property type="entry name" value="PolA_pol_NTPase"/>
</dbReference>
<dbReference type="InterPro" id="IPR007010">
    <property type="entry name" value="PolA_pol_RNA-bd_dom"/>
</dbReference>
<dbReference type="InterPro" id="IPR014492">
    <property type="entry name" value="PolyA_polymerase"/>
</dbReference>
<dbReference type="PANTHER" id="PTHR10682:SF36">
    <property type="entry name" value="NUCLEAR POLY(A) POLYMERASE 4"/>
    <property type="match status" value="1"/>
</dbReference>
<dbReference type="PANTHER" id="PTHR10682">
    <property type="entry name" value="POLY A POLYMERASE"/>
    <property type="match status" value="1"/>
</dbReference>
<dbReference type="Pfam" id="PF04928">
    <property type="entry name" value="PAP_central"/>
    <property type="match status" value="1"/>
</dbReference>
<dbReference type="Pfam" id="PF20750">
    <property type="entry name" value="PAP_NTPase"/>
    <property type="match status" value="1"/>
</dbReference>
<dbReference type="Pfam" id="PF04926">
    <property type="entry name" value="PAP_RNA-bind"/>
    <property type="match status" value="1"/>
</dbReference>
<dbReference type="PIRSF" id="PIRSF018425">
    <property type="entry name" value="PolyA_polymerase"/>
    <property type="match status" value="1"/>
</dbReference>
<dbReference type="SUPFAM" id="SSF81301">
    <property type="entry name" value="Nucleotidyltransferase"/>
    <property type="match status" value="1"/>
</dbReference>
<dbReference type="SUPFAM" id="SSF55003">
    <property type="entry name" value="PAP/Archaeal CCA-adding enzyme, C-terminal domain"/>
    <property type="match status" value="1"/>
</dbReference>
<dbReference type="SUPFAM" id="SSF81631">
    <property type="entry name" value="PAP/OAS1 substrate-binding domain"/>
    <property type="match status" value="1"/>
</dbReference>
<evidence type="ECO:0000250" key="1">
    <source>
        <dbReference type="UniProtKB" id="P25500"/>
    </source>
</evidence>
<evidence type="ECO:0000250" key="2">
    <source>
        <dbReference type="UniProtKB" id="P29468"/>
    </source>
</evidence>
<evidence type="ECO:0000255" key="3">
    <source>
        <dbReference type="PROSITE-ProRule" id="PRU00768"/>
    </source>
</evidence>
<evidence type="ECO:0000256" key="4">
    <source>
        <dbReference type="SAM" id="MobiDB-lite"/>
    </source>
</evidence>
<evidence type="ECO:0000269" key="5">
    <source>
    </source>
</evidence>
<evidence type="ECO:0000269" key="6">
    <source>
    </source>
</evidence>
<evidence type="ECO:0000269" key="7">
    <source>
    </source>
</evidence>
<evidence type="ECO:0000269" key="8">
    <source>
    </source>
</evidence>
<evidence type="ECO:0000303" key="9">
    <source>
    </source>
</evidence>
<evidence type="ECO:0000303" key="10">
    <source>
    </source>
</evidence>
<evidence type="ECO:0000305" key="11"/>
<evidence type="ECO:0000305" key="12">
    <source>
    </source>
</evidence>
<evidence type="ECO:0000305" key="13">
    <source ref="6"/>
</evidence>
<evidence type="ECO:0000312" key="14">
    <source>
        <dbReference type="Araport" id="AT4G32850"/>
    </source>
</evidence>
<evidence type="ECO:0000312" key="15">
    <source>
        <dbReference type="EMBL" id="AAL47435.1"/>
    </source>
</evidence>
<evidence type="ECO:0000312" key="16">
    <source>
        <dbReference type="EMBL" id="CAB80002.1"/>
    </source>
</evidence>
<reference key="1">
    <citation type="journal article" date="1999" name="Nature">
        <title>Sequence and analysis of chromosome 4 of the plant Arabidopsis thaliana.</title>
        <authorList>
            <person name="Mayer K.F.X."/>
            <person name="Schueller C."/>
            <person name="Wambutt R."/>
            <person name="Murphy G."/>
            <person name="Volckaert G."/>
            <person name="Pohl T."/>
            <person name="Duesterhoeft A."/>
            <person name="Stiekema W."/>
            <person name="Entian K.-D."/>
            <person name="Terryn N."/>
            <person name="Harris B."/>
            <person name="Ansorge W."/>
            <person name="Brandt P."/>
            <person name="Grivell L.A."/>
            <person name="Rieger M."/>
            <person name="Weichselgartner M."/>
            <person name="de Simone V."/>
            <person name="Obermaier B."/>
            <person name="Mache R."/>
            <person name="Mueller M."/>
            <person name="Kreis M."/>
            <person name="Delseny M."/>
            <person name="Puigdomenech P."/>
            <person name="Watson M."/>
            <person name="Schmidtheini T."/>
            <person name="Reichert B."/>
            <person name="Portetelle D."/>
            <person name="Perez-Alonso M."/>
            <person name="Boutry M."/>
            <person name="Bancroft I."/>
            <person name="Vos P."/>
            <person name="Hoheisel J."/>
            <person name="Zimmermann W."/>
            <person name="Wedler H."/>
            <person name="Ridley P."/>
            <person name="Langham S.-A."/>
            <person name="McCullagh B."/>
            <person name="Bilham L."/>
            <person name="Robben J."/>
            <person name="van der Schueren J."/>
            <person name="Grymonprez B."/>
            <person name="Chuang Y.-J."/>
            <person name="Vandenbussche F."/>
            <person name="Braeken M."/>
            <person name="Weltjens I."/>
            <person name="Voet M."/>
            <person name="Bastiaens I."/>
            <person name="Aert R."/>
            <person name="Defoor E."/>
            <person name="Weitzenegger T."/>
            <person name="Bothe G."/>
            <person name="Ramsperger U."/>
            <person name="Hilbert H."/>
            <person name="Braun M."/>
            <person name="Holzer E."/>
            <person name="Brandt A."/>
            <person name="Peters S."/>
            <person name="van Staveren M."/>
            <person name="Dirkse W."/>
            <person name="Mooijman P."/>
            <person name="Klein Lankhorst R."/>
            <person name="Rose M."/>
            <person name="Hauf J."/>
            <person name="Koetter P."/>
            <person name="Berneiser S."/>
            <person name="Hempel S."/>
            <person name="Feldpausch M."/>
            <person name="Lamberth S."/>
            <person name="Van den Daele H."/>
            <person name="De Keyser A."/>
            <person name="Buysshaert C."/>
            <person name="Gielen J."/>
            <person name="Villarroel R."/>
            <person name="De Clercq R."/>
            <person name="van Montagu M."/>
            <person name="Rogers J."/>
            <person name="Cronin A."/>
            <person name="Quail M.A."/>
            <person name="Bray-Allen S."/>
            <person name="Clark L."/>
            <person name="Doggett J."/>
            <person name="Hall S."/>
            <person name="Kay M."/>
            <person name="Lennard N."/>
            <person name="McLay K."/>
            <person name="Mayes R."/>
            <person name="Pettett A."/>
            <person name="Rajandream M.A."/>
            <person name="Lyne M."/>
            <person name="Benes V."/>
            <person name="Rechmann S."/>
            <person name="Borkova D."/>
            <person name="Bloecker H."/>
            <person name="Scharfe M."/>
            <person name="Grimm M."/>
            <person name="Loehnert T.-H."/>
            <person name="Dose S."/>
            <person name="de Haan M."/>
            <person name="Maarse A.C."/>
            <person name="Schaefer M."/>
            <person name="Mueller-Auer S."/>
            <person name="Gabel C."/>
            <person name="Fuchs M."/>
            <person name="Fartmann B."/>
            <person name="Granderath K."/>
            <person name="Dauner D."/>
            <person name="Herzl A."/>
            <person name="Neumann S."/>
            <person name="Argiriou A."/>
            <person name="Vitale D."/>
            <person name="Liguori R."/>
            <person name="Piravandi E."/>
            <person name="Massenet O."/>
            <person name="Quigley F."/>
            <person name="Clabauld G."/>
            <person name="Muendlein A."/>
            <person name="Felber R."/>
            <person name="Schnabl S."/>
            <person name="Hiller R."/>
            <person name="Schmidt W."/>
            <person name="Lecharny A."/>
            <person name="Aubourg S."/>
            <person name="Chefdor F."/>
            <person name="Cooke R."/>
            <person name="Berger C."/>
            <person name="Monfort A."/>
            <person name="Casacuberta E."/>
            <person name="Gibbons T."/>
            <person name="Weber N."/>
            <person name="Vandenbol M."/>
            <person name="Bargues M."/>
            <person name="Terol J."/>
            <person name="Torres A."/>
            <person name="Perez-Perez A."/>
            <person name="Purnelle B."/>
            <person name="Bent E."/>
            <person name="Johnson S."/>
            <person name="Tacon D."/>
            <person name="Jesse T."/>
            <person name="Heijnen L."/>
            <person name="Schwarz S."/>
            <person name="Scholler P."/>
            <person name="Heber S."/>
            <person name="Francs P."/>
            <person name="Bielke C."/>
            <person name="Frishman D."/>
            <person name="Haase D."/>
            <person name="Lemcke K."/>
            <person name="Mewes H.-W."/>
            <person name="Stocker S."/>
            <person name="Zaccaria P."/>
            <person name="Bevan M."/>
            <person name="Wilson R.K."/>
            <person name="de la Bastide M."/>
            <person name="Habermann K."/>
            <person name="Parnell L."/>
            <person name="Dedhia N."/>
            <person name="Gnoj L."/>
            <person name="Schutz K."/>
            <person name="Huang E."/>
            <person name="Spiegel L."/>
            <person name="Sekhon M."/>
            <person name="Murray J."/>
            <person name="Sheet P."/>
            <person name="Cordes M."/>
            <person name="Abu-Threideh J."/>
            <person name="Stoneking T."/>
            <person name="Kalicki J."/>
            <person name="Graves T."/>
            <person name="Harmon G."/>
            <person name="Edwards J."/>
            <person name="Latreille P."/>
            <person name="Courtney L."/>
            <person name="Cloud J."/>
            <person name="Abbott A."/>
            <person name="Scott K."/>
            <person name="Johnson D."/>
            <person name="Minx P."/>
            <person name="Bentley D."/>
            <person name="Fulton B."/>
            <person name="Miller N."/>
            <person name="Greco T."/>
            <person name="Kemp K."/>
            <person name="Kramer J."/>
            <person name="Fulton L."/>
            <person name="Mardis E."/>
            <person name="Dante M."/>
            <person name="Pepin K."/>
            <person name="Hillier L.W."/>
            <person name="Nelson J."/>
            <person name="Spieth J."/>
            <person name="Ryan E."/>
            <person name="Andrews S."/>
            <person name="Geisel C."/>
            <person name="Layman D."/>
            <person name="Du H."/>
            <person name="Ali J."/>
            <person name="Berghoff A."/>
            <person name="Jones K."/>
            <person name="Drone K."/>
            <person name="Cotton M."/>
            <person name="Joshu C."/>
            <person name="Antonoiu B."/>
            <person name="Zidanic M."/>
            <person name="Strong C."/>
            <person name="Sun H."/>
            <person name="Lamar B."/>
            <person name="Yordan C."/>
            <person name="Ma P."/>
            <person name="Zhong J."/>
            <person name="Preston R."/>
            <person name="Vil D."/>
            <person name="Shekher M."/>
            <person name="Matero A."/>
            <person name="Shah R."/>
            <person name="Swaby I.K."/>
            <person name="O'Shaughnessy A."/>
            <person name="Rodriguez M."/>
            <person name="Hoffman J."/>
            <person name="Till S."/>
            <person name="Granat S."/>
            <person name="Shohdy N."/>
            <person name="Hasegawa A."/>
            <person name="Hameed A."/>
            <person name="Lodhi M."/>
            <person name="Johnson A."/>
            <person name="Chen E."/>
            <person name="Marra M.A."/>
            <person name="Martienssen R."/>
            <person name="McCombie W.R."/>
        </authorList>
    </citation>
    <scope>NUCLEOTIDE SEQUENCE [LARGE SCALE GENOMIC DNA]</scope>
    <source>
        <strain>cv. Columbia</strain>
    </source>
</reference>
<reference key="2">
    <citation type="journal article" date="2017" name="Plant J.">
        <title>Araport11: a complete reannotation of the Arabidopsis thaliana reference genome.</title>
        <authorList>
            <person name="Cheng C.Y."/>
            <person name="Krishnakumar V."/>
            <person name="Chan A.P."/>
            <person name="Thibaud-Nissen F."/>
            <person name="Schobel S."/>
            <person name="Town C.D."/>
        </authorList>
    </citation>
    <scope>GENOME REANNOTATION</scope>
    <source>
        <strain>cv. Columbia</strain>
    </source>
</reference>
<reference key="3">
    <citation type="journal article" date="2003" name="Science">
        <title>Empirical analysis of transcriptional activity in the Arabidopsis genome.</title>
        <authorList>
            <person name="Yamada K."/>
            <person name="Lim J."/>
            <person name="Dale J.M."/>
            <person name="Chen H."/>
            <person name="Shinn P."/>
            <person name="Palm C.J."/>
            <person name="Southwick A.M."/>
            <person name="Wu H.C."/>
            <person name="Kim C.J."/>
            <person name="Nguyen M."/>
            <person name="Pham P.K."/>
            <person name="Cheuk R.F."/>
            <person name="Karlin-Newmann G."/>
            <person name="Liu S.X."/>
            <person name="Lam B."/>
            <person name="Sakano H."/>
            <person name="Wu T."/>
            <person name="Yu G."/>
            <person name="Miranda M."/>
            <person name="Quach H.L."/>
            <person name="Tripp M."/>
            <person name="Chang C.H."/>
            <person name="Lee J.M."/>
            <person name="Toriumi M.J."/>
            <person name="Chan M.M."/>
            <person name="Tang C.C."/>
            <person name="Onodera C.S."/>
            <person name="Deng J.M."/>
            <person name="Akiyama K."/>
            <person name="Ansari Y."/>
            <person name="Arakawa T."/>
            <person name="Banh J."/>
            <person name="Banno F."/>
            <person name="Bowser L."/>
            <person name="Brooks S.Y."/>
            <person name="Carninci P."/>
            <person name="Chao Q."/>
            <person name="Choy N."/>
            <person name="Enju A."/>
            <person name="Goldsmith A.D."/>
            <person name="Gurjal M."/>
            <person name="Hansen N.F."/>
            <person name="Hayashizaki Y."/>
            <person name="Johnson-Hopson C."/>
            <person name="Hsuan V.W."/>
            <person name="Iida K."/>
            <person name="Karnes M."/>
            <person name="Khan S."/>
            <person name="Koesema E."/>
            <person name="Ishida J."/>
            <person name="Jiang P.X."/>
            <person name="Jones T."/>
            <person name="Kawai J."/>
            <person name="Kamiya A."/>
            <person name="Meyers C."/>
            <person name="Nakajima M."/>
            <person name="Narusaka M."/>
            <person name="Seki M."/>
            <person name="Sakurai T."/>
            <person name="Satou M."/>
            <person name="Tamse R."/>
            <person name="Vaysberg M."/>
            <person name="Wallender E.K."/>
            <person name="Wong C."/>
            <person name="Yamamura Y."/>
            <person name="Yuan S."/>
            <person name="Shinozaki K."/>
            <person name="Davis R.W."/>
            <person name="Theologis A."/>
            <person name="Ecker J.R."/>
        </authorList>
    </citation>
    <scope>NUCLEOTIDE SEQUENCE [LARGE SCALE MRNA] (ISOFORM 1)</scope>
    <source>
        <strain>cv. Columbia</strain>
    </source>
</reference>
<reference key="4">
    <citation type="journal article" date="2009" name="DNA Res.">
        <title>Analysis of multiple occurrences of alternative splicing events in Arabidopsis thaliana using novel sequenced full-length cDNAs.</title>
        <authorList>
            <person name="Iida K."/>
            <person name="Fukami-Kobayashi K."/>
            <person name="Toyoda A."/>
            <person name="Sakaki Y."/>
            <person name="Kobayashi M."/>
            <person name="Seki M."/>
            <person name="Shinozaki K."/>
        </authorList>
    </citation>
    <scope>NUCLEOTIDE SEQUENCE [LARGE SCALE MRNA] (ISOFORMS 2 AND 3)</scope>
    <source>
        <strain>cv. Columbia</strain>
        <tissue>Rosette leaf</tissue>
    </source>
</reference>
<reference key="5">
    <citation type="journal article" date="2004" name="Biochim. Biophys. Acta">
        <title>Novel alternative splicing of mRNAs encoding poly(A) polymerases in Arabidopsis.</title>
        <authorList>
            <person name="Addepalli B."/>
            <person name="Meeks L.R."/>
            <person name="Forbes K.P."/>
            <person name="Hunt A.G."/>
        </authorList>
    </citation>
    <scope>NUCLEOTIDE SEQUENCE [MRNA] (ISOFORM 4)</scope>
    <scope>ALTERNATIVE SPLICING</scope>
    <scope>FUNCTION</scope>
    <scope>CATALYTIC ACTIVITY</scope>
    <scope>TISSUE SPECIFICITY</scope>
    <scope>GENE FAMILY</scope>
    <scope>NOMENCLATURE</scope>
</reference>
<reference key="6">
    <citation type="submission" date="2006-07" db="EMBL/GenBank/DDBJ databases">
        <title>Large-scale analysis of RIKEN Arabidopsis full-length (RAFL) cDNAs.</title>
        <authorList>
            <person name="Totoki Y."/>
            <person name="Seki M."/>
            <person name="Ishida J."/>
            <person name="Nakajima M."/>
            <person name="Enju A."/>
            <person name="Kamiya A."/>
            <person name="Narusaka M."/>
            <person name="Shin-i T."/>
            <person name="Nakagawa M."/>
            <person name="Sakamoto N."/>
            <person name="Oishi K."/>
            <person name="Kohara Y."/>
            <person name="Kobayashi M."/>
            <person name="Toyoda A."/>
            <person name="Sakaki Y."/>
            <person name="Sakurai T."/>
            <person name="Iida K."/>
            <person name="Akiyama K."/>
            <person name="Satou M."/>
            <person name="Toyoda T."/>
            <person name="Konagaya A."/>
            <person name="Carninci P."/>
            <person name="Kawai J."/>
            <person name="Hayashizaki Y."/>
            <person name="Shinozaki K."/>
        </authorList>
    </citation>
    <scope>NUCLEOTIDE SEQUENCE [LARGE SCALE MRNA] (ISOFORM 3)</scope>
    <source>
        <strain>cv. Columbia</strain>
    </source>
</reference>
<reference key="7">
    <citation type="journal article" date="2006" name="J. Biol. Chem.">
        <title>An Arabidopsis Fip1 homolog interacts with RNA and provides conceptual links with a number of other polyadenylation factor subunits.</title>
        <authorList>
            <person name="Forbes K.P."/>
            <person name="Addepalli B."/>
            <person name="Hunt A.G."/>
        </authorList>
    </citation>
    <scope>GENE FAMILY</scope>
    <scope>INTERACTION WITH FIPS5</scope>
</reference>
<reference key="8">
    <citation type="journal article" date="2008" name="BMC Genomics">
        <title>Arabidopsis mRNA polyadenylation machinery: comprehensive analysis of protein-protein interactions and gene expression profiling.</title>
        <authorList>
            <person name="Hunt A.G."/>
            <person name="Xu R."/>
            <person name="Addepalli B."/>
            <person name="Rao S."/>
            <person name="Forbes K.P."/>
            <person name="Meeks L.R."/>
            <person name="Xing D."/>
            <person name="Mo M."/>
            <person name="Zhao H."/>
            <person name="Bandyopadhyay A."/>
            <person name="Dampanaboina L."/>
            <person name="Marion A."/>
            <person name="Von Lanken C."/>
            <person name="Li Q.Q."/>
        </authorList>
    </citation>
    <scope>INTERACTION WITH CFIS2; PAPS1; PABN1; PABN2; PABN3; FIPS3 AND FIPS5</scope>
    <scope>GENE FAMILY</scope>
    <scope>NOMENCLATURE</scope>
</reference>
<reference key="9">
    <citation type="journal article" date="2009" name="PLoS ONE">
        <title>Characterization of genes encoding poly(A) polymerases in plants: evidence for duplication and functional specialization.</title>
        <authorList>
            <person name="Meeks L.R."/>
            <person name="Addepalli B."/>
            <person name="Hunt A.G."/>
        </authorList>
    </citation>
    <scope>FUNCTION</scope>
    <scope>DISRUPTION PHENOTYPE</scope>
    <scope>SUBCELLULAR LOCATION</scope>
    <scope>TISSUE SPECIFICITY</scope>
</reference>
<sequence length="741" mass="83943">MMVGTQNLGGSLPPLNSPKSYGITKPLSLAGPSSADIKRNVELEKYLVDEGLYESKDDTMRREEVLGRIDQIVKHWVKQLTQQRGYTDQMVEDANAVIFTFGSYRLGVHGPGADIDTLCVGPSYVNREEDFFIILHDILAEMEEVTELHPVPDAHVPVMKFKFQGIPIDLLYASISLLVVPQDLDISSSSVLCEVDEPTVRSLNGCRVADQILKLVPNFEHFRTTLRCLKYWAKKRGVYSNVTGFLGGVNWALLVARVCQLYPNAIPSMLVSRFFRVYTQWRWPNPVMLCAIEEDELGFPVWDRRKNHRDRYHLMPIITPAYPCMNSSYNVSQSTLRVMTEQFQFGNNILQEIELNKQHWSSLFEQYMFFEAYKNYLQVDIVAADAEDLLAWKGWVESRFRQLTLKIERDTNGMLMCHPQPNEYVDTARQFLHCAFFMGLQRAEGVGGQECQQFDIRGTVDEFRQEVNMYMFWKPGMDVFVSHVRRRQLPPFVFPNGYRRPRQSRHQNLPGGKSGEDGSVSHSGSVVERHAKRKNDSEMMDVRPEKPEKRASLSPQSLDIVSPENSAITTGWTPPVCNLRRPPSEEIEADNLNTECTELTDLARNECNSGSEQVLEVDSMAVVQECSDPAEPLGKCVTPDSVDVVACVSGQEENLDRNLRSVSISGTDSPLLPSRSCGQNRDYEGFGFPAANSDPMGKKNLYSQSGMSEDLQSNSLVSGMEKSEDRARSESFQKSQIRLLT</sequence>
<organism evidence="15">
    <name type="scientific">Arabidopsis thaliana</name>
    <name type="common">Mouse-ear cress</name>
    <dbReference type="NCBI Taxonomy" id="3702"/>
    <lineage>
        <taxon>Eukaryota</taxon>
        <taxon>Viridiplantae</taxon>
        <taxon>Streptophyta</taxon>
        <taxon>Embryophyta</taxon>
        <taxon>Tracheophyta</taxon>
        <taxon>Spermatophyta</taxon>
        <taxon>Magnoliopsida</taxon>
        <taxon>eudicotyledons</taxon>
        <taxon>Gunneridae</taxon>
        <taxon>Pentapetalae</taxon>
        <taxon>rosids</taxon>
        <taxon>malvids</taxon>
        <taxon>Brassicales</taxon>
        <taxon>Brassicaceae</taxon>
        <taxon>Camelineae</taxon>
        <taxon>Arabidopsis</taxon>
    </lineage>
</organism>